<reference key="1">
    <citation type="submission" date="2008-02" db="EMBL/GenBank/DDBJ databases">
        <title>Complete sequence of Shewanella woodyi ATCC 51908.</title>
        <authorList>
            <consortium name="US DOE Joint Genome Institute"/>
            <person name="Copeland A."/>
            <person name="Lucas S."/>
            <person name="Lapidus A."/>
            <person name="Glavina del Rio T."/>
            <person name="Dalin E."/>
            <person name="Tice H."/>
            <person name="Bruce D."/>
            <person name="Goodwin L."/>
            <person name="Pitluck S."/>
            <person name="Sims D."/>
            <person name="Brettin T."/>
            <person name="Detter J.C."/>
            <person name="Han C."/>
            <person name="Kuske C.R."/>
            <person name="Schmutz J."/>
            <person name="Larimer F."/>
            <person name="Land M."/>
            <person name="Hauser L."/>
            <person name="Kyrpides N."/>
            <person name="Lykidis A."/>
            <person name="Zhao J.-S."/>
            <person name="Richardson P."/>
        </authorList>
    </citation>
    <scope>NUCLEOTIDE SEQUENCE [LARGE SCALE GENOMIC DNA]</scope>
    <source>
        <strain>ATCC 51908 / MS32</strain>
    </source>
</reference>
<organism>
    <name type="scientific">Shewanella woodyi (strain ATCC 51908 / MS32)</name>
    <dbReference type="NCBI Taxonomy" id="392500"/>
    <lineage>
        <taxon>Bacteria</taxon>
        <taxon>Pseudomonadati</taxon>
        <taxon>Pseudomonadota</taxon>
        <taxon>Gammaproteobacteria</taxon>
        <taxon>Alteromonadales</taxon>
        <taxon>Shewanellaceae</taxon>
        <taxon>Shewanella</taxon>
    </lineage>
</organism>
<gene>
    <name evidence="1" type="primary">rplC</name>
    <name type="ordered locus">Swoo_4690</name>
</gene>
<accession>B1KMY3</accession>
<sequence>MAIGLIGRKVGMTRIFTEDGASIPVTVIEIAANRVTQVRTLETDGYRALQVTTGTKKANRITKPEAGHFAKAGVEAGRGLWEVRLADDEGEGIEVGAELNVDIFADVAKVDVTGQSKGKGFQGGIKRWNFHAQDMTHGNSLAHRSNGSIGQNQTPGRVFKGKKMSGHMGAERVTTQNLDVVRVDAERNLLLVKGAVPGATNGNLIIKPAVKA</sequence>
<comment type="function">
    <text evidence="1">One of the primary rRNA binding proteins, it binds directly near the 3'-end of the 23S rRNA, where it nucleates assembly of the 50S subunit.</text>
</comment>
<comment type="subunit">
    <text evidence="1">Part of the 50S ribosomal subunit. Forms a cluster with proteins L14 and L19.</text>
</comment>
<comment type="PTM">
    <text evidence="1">Methylated by PrmB.</text>
</comment>
<comment type="similarity">
    <text evidence="1">Belongs to the universal ribosomal protein uL3 family.</text>
</comment>
<feature type="chain" id="PRO_1000141921" description="Large ribosomal subunit protein uL3">
    <location>
        <begin position="1"/>
        <end position="212"/>
    </location>
</feature>
<feature type="modified residue" description="N5-methylglutamine" evidence="1">
    <location>
        <position position="153"/>
    </location>
</feature>
<proteinExistence type="inferred from homology"/>
<evidence type="ECO:0000255" key="1">
    <source>
        <dbReference type="HAMAP-Rule" id="MF_01325"/>
    </source>
</evidence>
<evidence type="ECO:0000305" key="2"/>
<protein>
    <recommendedName>
        <fullName evidence="1">Large ribosomal subunit protein uL3</fullName>
    </recommendedName>
    <alternativeName>
        <fullName evidence="2">50S ribosomal protein L3</fullName>
    </alternativeName>
</protein>
<dbReference type="EMBL" id="CP000961">
    <property type="protein sequence ID" value="ACA88940.1"/>
    <property type="molecule type" value="Genomic_DNA"/>
</dbReference>
<dbReference type="RefSeq" id="WP_012327260.1">
    <property type="nucleotide sequence ID" value="NC_010506.1"/>
</dbReference>
<dbReference type="SMR" id="B1KMY3"/>
<dbReference type="STRING" id="392500.Swoo_4690"/>
<dbReference type="KEGG" id="swd:Swoo_4690"/>
<dbReference type="eggNOG" id="COG0087">
    <property type="taxonomic scope" value="Bacteria"/>
</dbReference>
<dbReference type="HOGENOM" id="CLU_044142_4_1_6"/>
<dbReference type="Proteomes" id="UP000002168">
    <property type="component" value="Chromosome"/>
</dbReference>
<dbReference type="GO" id="GO:0022625">
    <property type="term" value="C:cytosolic large ribosomal subunit"/>
    <property type="evidence" value="ECO:0007669"/>
    <property type="project" value="TreeGrafter"/>
</dbReference>
<dbReference type="GO" id="GO:0019843">
    <property type="term" value="F:rRNA binding"/>
    <property type="evidence" value="ECO:0007669"/>
    <property type="project" value="UniProtKB-UniRule"/>
</dbReference>
<dbReference type="GO" id="GO:0003735">
    <property type="term" value="F:structural constituent of ribosome"/>
    <property type="evidence" value="ECO:0007669"/>
    <property type="project" value="InterPro"/>
</dbReference>
<dbReference type="GO" id="GO:0006412">
    <property type="term" value="P:translation"/>
    <property type="evidence" value="ECO:0007669"/>
    <property type="project" value="UniProtKB-UniRule"/>
</dbReference>
<dbReference type="FunFam" id="2.40.30.10:FF:000004">
    <property type="entry name" value="50S ribosomal protein L3"/>
    <property type="match status" value="1"/>
</dbReference>
<dbReference type="FunFam" id="3.30.160.810:FF:000001">
    <property type="entry name" value="50S ribosomal protein L3"/>
    <property type="match status" value="1"/>
</dbReference>
<dbReference type="Gene3D" id="3.30.160.810">
    <property type="match status" value="1"/>
</dbReference>
<dbReference type="Gene3D" id="2.40.30.10">
    <property type="entry name" value="Translation factors"/>
    <property type="match status" value="1"/>
</dbReference>
<dbReference type="HAMAP" id="MF_01325_B">
    <property type="entry name" value="Ribosomal_uL3_B"/>
    <property type="match status" value="1"/>
</dbReference>
<dbReference type="InterPro" id="IPR000597">
    <property type="entry name" value="Ribosomal_uL3"/>
</dbReference>
<dbReference type="InterPro" id="IPR019927">
    <property type="entry name" value="Ribosomal_uL3_bac/org-type"/>
</dbReference>
<dbReference type="InterPro" id="IPR019926">
    <property type="entry name" value="Ribosomal_uL3_CS"/>
</dbReference>
<dbReference type="InterPro" id="IPR009000">
    <property type="entry name" value="Transl_B-barrel_sf"/>
</dbReference>
<dbReference type="NCBIfam" id="TIGR03625">
    <property type="entry name" value="L3_bact"/>
    <property type="match status" value="1"/>
</dbReference>
<dbReference type="PANTHER" id="PTHR11229">
    <property type="entry name" value="50S RIBOSOMAL PROTEIN L3"/>
    <property type="match status" value="1"/>
</dbReference>
<dbReference type="PANTHER" id="PTHR11229:SF16">
    <property type="entry name" value="LARGE RIBOSOMAL SUBUNIT PROTEIN UL3C"/>
    <property type="match status" value="1"/>
</dbReference>
<dbReference type="Pfam" id="PF00297">
    <property type="entry name" value="Ribosomal_L3"/>
    <property type="match status" value="1"/>
</dbReference>
<dbReference type="SUPFAM" id="SSF50447">
    <property type="entry name" value="Translation proteins"/>
    <property type="match status" value="1"/>
</dbReference>
<dbReference type="PROSITE" id="PS00474">
    <property type="entry name" value="RIBOSOMAL_L3"/>
    <property type="match status" value="1"/>
</dbReference>
<keyword id="KW-0488">Methylation</keyword>
<keyword id="KW-1185">Reference proteome</keyword>
<keyword id="KW-0687">Ribonucleoprotein</keyword>
<keyword id="KW-0689">Ribosomal protein</keyword>
<keyword id="KW-0694">RNA-binding</keyword>
<keyword id="KW-0699">rRNA-binding</keyword>
<name>RL3_SHEWM</name>